<keyword id="KW-0472">Membrane</keyword>
<keyword id="KW-0496">Mitochondrion</keyword>
<keyword id="KW-0999">Mitochondrion inner membrane</keyword>
<keyword id="KW-1185">Reference proteome</keyword>
<keyword id="KW-0809">Transit peptide</keyword>
<keyword id="KW-0812">Transmembrane</keyword>
<keyword id="KW-1133">Transmembrane helix</keyword>
<keyword id="KW-0832">Ubl conjugation</keyword>
<name>COX8A_MACFA</name>
<proteinExistence type="inferred from homology"/>
<reference key="1">
    <citation type="journal article" date="2002" name="Genomics">
        <title>Search for genes positively selected during primate evolution by 5'-end-sequence screening of cynomolgus monkey cDNAs.</title>
        <authorList>
            <person name="Osada N."/>
            <person name="Kusuda J."/>
            <person name="Hirata M."/>
            <person name="Tanuma R."/>
            <person name="Hida M."/>
            <person name="Sugano S."/>
            <person name="Hirai M."/>
            <person name="Hashimoto K."/>
        </authorList>
    </citation>
    <scope>NUCLEOTIDE SEQUENCE [LARGE SCALE MRNA]</scope>
    <source>
        <tissue>Parietal cortex</tissue>
    </source>
</reference>
<evidence type="ECO:0000250" key="1">
    <source>
        <dbReference type="UniProtKB" id="P10175"/>
    </source>
</evidence>
<evidence type="ECO:0000250" key="2">
    <source>
        <dbReference type="UniProtKB" id="P10176"/>
    </source>
</evidence>
<evidence type="ECO:0000305" key="3"/>
<dbReference type="EMBL" id="AB072015">
    <property type="protein sequence ID" value="BAB86804.1"/>
    <property type="molecule type" value="mRNA"/>
</dbReference>
<dbReference type="SMR" id="Q8SPI5"/>
<dbReference type="STRING" id="9541.ENSMFAP00000008284"/>
<dbReference type="Ensembl" id="ENSMFAT00000021769.2">
    <property type="protein sequence ID" value="ENSMFAP00000008284.1"/>
    <property type="gene ID" value="ENSMFAG00000001343.2"/>
</dbReference>
<dbReference type="GeneID" id="102139510"/>
<dbReference type="KEGG" id="mcf:102139510"/>
<dbReference type="VEuPathDB" id="HostDB:ENSMFAG00000001343"/>
<dbReference type="eggNOG" id="ENOG502SA62">
    <property type="taxonomic scope" value="Eukaryota"/>
</dbReference>
<dbReference type="GeneTree" id="ENSGT00390000006255"/>
<dbReference type="OMA" id="AQVHSMP"/>
<dbReference type="OrthoDB" id="15835at314294"/>
<dbReference type="UniPathway" id="UPA00705"/>
<dbReference type="Proteomes" id="UP000233100">
    <property type="component" value="Chromosome 14"/>
</dbReference>
<dbReference type="Bgee" id="ENSMFAG00000001343">
    <property type="expression patterns" value="Expressed in heart and 13 other cell types or tissues"/>
</dbReference>
<dbReference type="GO" id="GO:0005743">
    <property type="term" value="C:mitochondrial inner membrane"/>
    <property type="evidence" value="ECO:0007669"/>
    <property type="project" value="UniProtKB-SubCell"/>
</dbReference>
<dbReference type="GO" id="GO:0045277">
    <property type="term" value="C:respiratory chain complex IV"/>
    <property type="evidence" value="ECO:0007669"/>
    <property type="project" value="InterPro"/>
</dbReference>
<dbReference type="GO" id="GO:0006123">
    <property type="term" value="P:mitochondrial electron transport, cytochrome c to oxygen"/>
    <property type="evidence" value="ECO:0007669"/>
    <property type="project" value="InterPro"/>
</dbReference>
<dbReference type="CDD" id="cd00930">
    <property type="entry name" value="Cyt_c_Oxidase_VIII"/>
    <property type="match status" value="1"/>
</dbReference>
<dbReference type="FunFam" id="4.10.81.10:FF:000001">
    <property type="entry name" value="Cytochrome c oxidase subunit 8B, mitochondrial"/>
    <property type="match status" value="1"/>
</dbReference>
<dbReference type="Gene3D" id="4.10.81.10">
    <property type="entry name" value="Cytochrome c oxidase, subunit 8"/>
    <property type="match status" value="1"/>
</dbReference>
<dbReference type="InterPro" id="IPR003205">
    <property type="entry name" value="Cyt_c_oxidase_su8"/>
</dbReference>
<dbReference type="InterPro" id="IPR036548">
    <property type="entry name" value="Cyt_c_oxidase_su8_sf"/>
</dbReference>
<dbReference type="PANTHER" id="PTHR16717">
    <property type="entry name" value="CYTOCHROME C OXIDASE POLYPEPTIDE VIII"/>
    <property type="match status" value="1"/>
</dbReference>
<dbReference type="PANTHER" id="PTHR16717:SF1">
    <property type="entry name" value="CYTOCHROME C OXIDASE SUBUNIT 8A, MITOCHONDRIAL"/>
    <property type="match status" value="1"/>
</dbReference>
<dbReference type="Pfam" id="PF02285">
    <property type="entry name" value="COX8"/>
    <property type="match status" value="1"/>
</dbReference>
<dbReference type="SUPFAM" id="SSF81431">
    <property type="entry name" value="Mitochondrial cytochrome c oxidase subunit VIIIb (aka IX)"/>
    <property type="match status" value="1"/>
</dbReference>
<organism>
    <name type="scientific">Macaca fascicularis</name>
    <name type="common">Crab-eating macaque</name>
    <name type="synonym">Cynomolgus monkey</name>
    <dbReference type="NCBI Taxonomy" id="9541"/>
    <lineage>
        <taxon>Eukaryota</taxon>
        <taxon>Metazoa</taxon>
        <taxon>Chordata</taxon>
        <taxon>Craniata</taxon>
        <taxon>Vertebrata</taxon>
        <taxon>Euteleostomi</taxon>
        <taxon>Mammalia</taxon>
        <taxon>Eutheria</taxon>
        <taxon>Euarchontoglires</taxon>
        <taxon>Primates</taxon>
        <taxon>Haplorrhini</taxon>
        <taxon>Catarrhini</taxon>
        <taxon>Cercopithecidae</taxon>
        <taxon>Cercopithecinae</taxon>
        <taxon>Macaca</taxon>
    </lineage>
</organism>
<comment type="function">
    <text evidence="1">Component of the cytochrome c oxidase, the last enzyme in the mitochondrial electron transport chain which drives oxidative phosphorylation. The respiratory chain contains 3 multisubunit complexes succinate dehydrogenase (complex II, CII), ubiquinol-cytochrome c oxidoreductase (cytochrome b-c1 complex, complex III, CIII) and cytochrome c oxidase (complex IV, CIV), that cooperate to transfer electrons derived from NADH and succinate to molecular oxygen, creating an electrochemical gradient over the inner membrane that drives transmembrane transport and the ATP synthase. Cytochrome c oxidase is the component of the respiratory chain that catalyzes the reduction of oxygen to water. Electrons originating from reduced cytochrome c in the intermembrane space (IMS) are transferred via the dinuclear copper A center (CU(A)) of subunit 2 and heme A of subunit 1 to the active site in subunit 1, a binuclear center (BNC) formed by heme A3 and copper B (CU(B)). The BNC reduces molecular oxygen to 2 water molecules using 4 electrons from cytochrome c in the IMS and 4 protons from the mitochondrial matrix.</text>
</comment>
<comment type="pathway">
    <text evidence="1">Energy metabolism; oxidative phosphorylation.</text>
</comment>
<comment type="subunit">
    <text evidence="2">Component of the cytochrome c oxidase (complex IV, CIV), a multisubunit enzyme composed of 14 subunits. The complex is composed of a catalytic core of 3 subunits MT-CO1, MT-CO2 and MT-CO3, encoded in the mitochondrial DNA, and 11 supernumerary subunits COX4I, COX5A, COX5B, COX6A, COX6B, COX6C, COX7A, COX7B, COX7C, COX8 and NDUFA4, which are encoded in the nuclear genome. The complex exists as a monomer or a dimer and forms supercomplexes (SCs) in the inner mitochondrial membrane with NADH-ubiquinone oxidoreductase (complex I, CI) and ubiquinol-cytochrome c oxidoreductase (cytochrome b-c1 complex, complex III, CIII), resulting in different assemblies (supercomplex SCI(1)III(2)IV(1) and megacomplex MCI(2)III(2)IV(2)).</text>
</comment>
<comment type="subcellular location">
    <subcellularLocation>
        <location evidence="2">Mitochondrion inner membrane</location>
        <topology evidence="2">Single-pass membrane protein</topology>
    </subcellularLocation>
</comment>
<comment type="PTM">
    <text evidence="2">In response to mitochondrial stress, the precursor protein is ubiquitinated by the SIFI complex in the cytoplasm before mitochondrial import, leading to its degradation. Within the SIFI complex, UBR4 initiates ubiquitin chain that are further elongated or branched by KCMF1.</text>
</comment>
<comment type="similarity">
    <text evidence="3">Belongs to the cytochrome c oxidase VIII family.</text>
</comment>
<sequence>MSVLTSLLLRGLTGSARRLPVPRAKVHSMPPEEELGIMEKAIGLTFCFVSLFLPAGWILSHLEDYKRPE</sequence>
<protein>
    <recommendedName>
        <fullName>Cytochrome c oxidase subunit 8A, mitochondrial</fullName>
    </recommendedName>
    <alternativeName>
        <fullName>Cytochrome c oxidase polypeptide VIII-liver/heart</fullName>
    </alternativeName>
    <alternativeName>
        <fullName>Cytochrome c oxidase subunit 8-2</fullName>
    </alternativeName>
</protein>
<accession>Q8SPI5</accession>
<gene>
    <name type="primary">COX8A</name>
    <name type="synonym">COX8</name>
    <name type="synonym">COX8L</name>
    <name type="ORF">QnpA-21537</name>
</gene>
<feature type="transit peptide" description="Mitochondrion" evidence="2">
    <location>
        <begin position="1"/>
        <end position="25"/>
    </location>
</feature>
<feature type="chain" id="PRO_0000006188" description="Cytochrome c oxidase subunit 8A, mitochondrial">
    <location>
        <begin position="26"/>
        <end position="69"/>
    </location>
</feature>
<feature type="topological domain" description="Mitochondrial matrix" evidence="2">
    <location>
        <begin position="26"/>
        <end position="36"/>
    </location>
</feature>
<feature type="transmembrane region" description="Helical" evidence="1">
    <location>
        <begin position="37"/>
        <end position="60"/>
    </location>
</feature>
<feature type="topological domain" description="Mitochondrial intermembrane" evidence="2">
    <location>
        <begin position="61"/>
        <end position="69"/>
    </location>
</feature>